<dbReference type="EC" id="1.1.1.-" evidence="8"/>
<dbReference type="EMBL" id="CM002236">
    <property type="protein sequence ID" value="EAA36366.3"/>
    <property type="molecule type" value="Genomic_DNA"/>
</dbReference>
<dbReference type="RefSeq" id="XP_965602.3">
    <property type="nucleotide sequence ID" value="XM_960509.3"/>
</dbReference>
<dbReference type="SMR" id="Q7SHI4"/>
<dbReference type="STRING" id="367110.Q7SHI4"/>
<dbReference type="EnsemblFungi" id="EAA36366">
    <property type="protein sequence ID" value="EAA36366"/>
    <property type="gene ID" value="NCU02920"/>
</dbReference>
<dbReference type="GeneID" id="3881727"/>
<dbReference type="KEGG" id="ncr:NCU02920"/>
<dbReference type="VEuPathDB" id="FungiDB:NCU02920"/>
<dbReference type="HOGENOM" id="CLU_010194_1_0_1"/>
<dbReference type="InParanoid" id="Q7SHI4"/>
<dbReference type="OrthoDB" id="5840532at2759"/>
<dbReference type="Proteomes" id="UP000001805">
    <property type="component" value="Chromosome 1, Linkage Group I"/>
</dbReference>
<dbReference type="GO" id="GO:0016491">
    <property type="term" value="F:oxidoreductase activity"/>
    <property type="evidence" value="ECO:0007669"/>
    <property type="project" value="UniProtKB-KW"/>
</dbReference>
<dbReference type="CDD" id="cd05233">
    <property type="entry name" value="SDR_c"/>
    <property type="match status" value="1"/>
</dbReference>
<dbReference type="FunFam" id="3.40.50.720:FF:000084">
    <property type="entry name" value="Short-chain dehydrogenase reductase"/>
    <property type="match status" value="1"/>
</dbReference>
<dbReference type="Gene3D" id="3.40.50.720">
    <property type="entry name" value="NAD(P)-binding Rossmann-like Domain"/>
    <property type="match status" value="1"/>
</dbReference>
<dbReference type="InterPro" id="IPR036291">
    <property type="entry name" value="NAD(P)-bd_dom_sf"/>
</dbReference>
<dbReference type="InterPro" id="IPR020904">
    <property type="entry name" value="Sc_DH/Rdtase_CS"/>
</dbReference>
<dbReference type="InterPro" id="IPR002347">
    <property type="entry name" value="SDR_fam"/>
</dbReference>
<dbReference type="PANTHER" id="PTHR24321">
    <property type="entry name" value="DEHYDROGENASES, SHORT CHAIN"/>
    <property type="match status" value="1"/>
</dbReference>
<dbReference type="PANTHER" id="PTHR24321:SF12">
    <property type="entry name" value="SHORT-CHAIN DEHYDROGENASE_REDUCTASE FAMILY, PUTATIVE (AFU_ORTHOLOGUE AFUA_5G14340)-RELATED"/>
    <property type="match status" value="1"/>
</dbReference>
<dbReference type="Pfam" id="PF13561">
    <property type="entry name" value="adh_short_C2"/>
    <property type="match status" value="1"/>
</dbReference>
<dbReference type="PRINTS" id="PR00081">
    <property type="entry name" value="GDHRDH"/>
</dbReference>
<dbReference type="PRINTS" id="PR00080">
    <property type="entry name" value="SDRFAMILY"/>
</dbReference>
<dbReference type="SUPFAM" id="SSF51735">
    <property type="entry name" value="NAD(P)-binding Rossmann-fold domains"/>
    <property type="match status" value="1"/>
</dbReference>
<dbReference type="PROSITE" id="PS00061">
    <property type="entry name" value="ADH_SHORT"/>
    <property type="match status" value="1"/>
</dbReference>
<gene>
    <name evidence="6" type="primary">srdC</name>
    <name type="ORF">NCU02920</name>
</gene>
<protein>
    <recommendedName>
        <fullName evidence="6">Short-chain dehydrogenase srdC</fullName>
        <ecNumber evidence="8">1.1.1.-</ecNumber>
    </recommendedName>
    <alternativeName>
        <fullName evidence="6">Sordarial biosynthesis cluster protein srdC</fullName>
    </alternativeName>
</protein>
<accession>Q7SHI4</accession>
<sequence length="272" mass="28205">MDLTGSAFVIGASGIGKACALAFARYGVRGIVIADLTLEAASAVAAECKSQATHPHFLAEAVAIDVTKEESVYQAIAYAHQVLGRIDYAVNSAGVGVQLANEIAEASVSEFEKMFKVNVTGTFIVTRALSALMKTQDPVPVDEAVPARGVSRGSIVNVGSASGFVATPGMVQYTAAKHAVVGITKNAALDNAKHGIRVNSVCPSWVDTPMIRKAMDDIPELGEMIQKAVPLGRIALAEEVADAVMFLSSPKASYATGCNMILDGGTTLAAHV</sequence>
<feature type="chain" id="PRO_0000449333" description="Short-chain dehydrogenase srdC">
    <location>
        <begin position="1"/>
        <end position="272"/>
    </location>
</feature>
<feature type="active site" description="Proton donor" evidence="2">
    <location>
        <position position="173"/>
    </location>
</feature>
<feature type="active site" description="Lowers pKa of active site Tyr" evidence="2">
    <location>
        <position position="177"/>
    </location>
</feature>
<feature type="binding site" evidence="1">
    <location>
        <position position="15"/>
    </location>
    <ligand>
        <name>NADP(+)</name>
        <dbReference type="ChEBI" id="CHEBI:58349"/>
    </ligand>
</feature>
<feature type="binding site" evidence="1">
    <location>
        <position position="65"/>
    </location>
    <ligand>
        <name>NADP(+)</name>
        <dbReference type="ChEBI" id="CHEBI:58349"/>
    </ligand>
</feature>
<feature type="binding site" evidence="1">
    <location>
        <position position="127"/>
    </location>
    <ligand>
        <name>NADP(+)</name>
        <dbReference type="ChEBI" id="CHEBI:58349"/>
    </ligand>
</feature>
<feature type="binding site" evidence="2">
    <location>
        <position position="173"/>
    </location>
    <ligand>
        <name>NADP(+)</name>
        <dbReference type="ChEBI" id="CHEBI:58349"/>
    </ligand>
</feature>
<feature type="binding site" evidence="2">
    <location>
        <position position="177"/>
    </location>
    <ligand>
        <name>NADP(+)</name>
        <dbReference type="ChEBI" id="CHEBI:58349"/>
    </ligand>
</feature>
<feature type="binding site" evidence="2">
    <location>
        <position position="206"/>
    </location>
    <ligand>
        <name>NADP(+)</name>
        <dbReference type="ChEBI" id="CHEBI:58349"/>
    </ligand>
</feature>
<feature type="binding site" evidence="1">
    <location>
        <position position="208"/>
    </location>
    <ligand>
        <name>NADP(+)</name>
        <dbReference type="ChEBI" id="CHEBI:58349"/>
    </ligand>
</feature>
<name>SRDC_NEUCR</name>
<proteinExistence type="evidence at transcript level"/>
<evidence type="ECO:0000250" key="1">
    <source>
        <dbReference type="UniProtKB" id="L0E2Z4"/>
    </source>
</evidence>
<evidence type="ECO:0000250" key="2">
    <source>
        <dbReference type="UniProtKB" id="O93868"/>
    </source>
</evidence>
<evidence type="ECO:0000269" key="3">
    <source>
    </source>
</evidence>
<evidence type="ECO:0000269" key="4">
    <source>
    </source>
</evidence>
<evidence type="ECO:0000269" key="5">
    <source>
    </source>
</evidence>
<evidence type="ECO:0000303" key="6">
    <source>
    </source>
</evidence>
<evidence type="ECO:0000305" key="7"/>
<evidence type="ECO:0000305" key="8">
    <source>
    </source>
</evidence>
<organism>
    <name type="scientific">Neurospora crassa (strain ATCC 24698 / 74-OR23-1A / CBS 708.71 / DSM 1257 / FGSC 987)</name>
    <dbReference type="NCBI Taxonomy" id="367110"/>
    <lineage>
        <taxon>Eukaryota</taxon>
        <taxon>Fungi</taxon>
        <taxon>Dikarya</taxon>
        <taxon>Ascomycota</taxon>
        <taxon>Pezizomycotina</taxon>
        <taxon>Sordariomycetes</taxon>
        <taxon>Sordariomycetidae</taxon>
        <taxon>Sordariales</taxon>
        <taxon>Sordariaceae</taxon>
        <taxon>Neurospora</taxon>
    </lineage>
</organism>
<comment type="function">
    <text evidence="3 4 5">Short-chain dehydrogenase; part of the gene cluster that mediates the biosynthesis of sordarial, a salicylic aldehyde structurally related to the phytotoxin pyriculol (PubMed:19277664, PubMed:28485098, PubMed:30908040). The most interesting aspect of this pathway is formation of an aromatic product from the highly reducing polyketide synthase srdA (PubMed:30908040). SrdA synthesizes a reduced polyketide chain from one molecule of acetyl-CoA and five molecules of malonyl-CoA (PubMed:30908040). The polyketide chain is then reductively released as an aldehyde (PubMed:30908040). The oxidoreductases srdC, srdD and srdE then oxidize one of the hydroxy groups to facilitate the intramolecular aldol condensation, followed by dehydration to yield a salicylic aldehyde (PubMed:30908040). This aldehyde can undergo facile reduction by endogenous reductases to yield the alcohol 1-hydroxy-2-hydroxymethyl-3-pent-1,3-dienylbenzene (PubMed:30908040). The flavin-dependent srdI counteract against the propensity of the aldehydes to be reduced under physiological conditions and is responsible for reoxidizing 1-hydroxy-2-hydroxymethyl-3-pent-1,3-dienylbenzene back to the salicylic aldehyde (PubMed:30908040). This salicylic aldehyde is then selectively epoxidized by the cupin-domain-containing oxidoreductase srdB to yield the epoxide, which can be hydrolyzed stereoselectively by the hydrolase srdG to give the final product sordarial (PubMed:30908040).</text>
</comment>
<comment type="induction">
    <text evidence="3 4">Expression is up-regulated during sexual development (PubMed:19277664). Expression is also up-regulated during confrontation with the arthropod fungivore Drosophila melanogaster (PubMed:28485098).</text>
</comment>
<comment type="similarity">
    <text evidence="7">Belongs to the short-chain dehydrogenases/reductases (SDR) family.</text>
</comment>
<comment type="caution">
    <text evidence="4 5">A recent genetics report associated srdA and its cluster with the biosynthesis of furanocoumarin neurosporin A, a metabolite produced by N.crassa for chemoresistance against predation by arthropod fungivores (PubMed:28485098). However, based on the gene cluster organization and predicted gene functions, this cluster is unlikely to be involved in neurosporin A biosynthesis, but instead produces compounds similar to pyriculol (PubMed:30908040).</text>
</comment>
<keyword id="KW-0521">NADP</keyword>
<keyword id="KW-0560">Oxidoreductase</keyword>
<keyword id="KW-1185">Reference proteome</keyword>
<reference key="1">
    <citation type="journal article" date="2003" name="Nature">
        <title>The genome sequence of the filamentous fungus Neurospora crassa.</title>
        <authorList>
            <person name="Galagan J.E."/>
            <person name="Calvo S.E."/>
            <person name="Borkovich K.A."/>
            <person name="Selker E.U."/>
            <person name="Read N.D."/>
            <person name="Jaffe D.B."/>
            <person name="FitzHugh W."/>
            <person name="Ma L.-J."/>
            <person name="Smirnov S."/>
            <person name="Purcell S."/>
            <person name="Rehman B."/>
            <person name="Elkins T."/>
            <person name="Engels R."/>
            <person name="Wang S."/>
            <person name="Nielsen C.B."/>
            <person name="Butler J."/>
            <person name="Endrizzi M."/>
            <person name="Qui D."/>
            <person name="Ianakiev P."/>
            <person name="Bell-Pedersen D."/>
            <person name="Nelson M.A."/>
            <person name="Werner-Washburne M."/>
            <person name="Selitrennikoff C.P."/>
            <person name="Kinsey J.A."/>
            <person name="Braun E.L."/>
            <person name="Zelter A."/>
            <person name="Schulte U."/>
            <person name="Kothe G.O."/>
            <person name="Jedd G."/>
            <person name="Mewes H.-W."/>
            <person name="Staben C."/>
            <person name="Marcotte E."/>
            <person name="Greenberg D."/>
            <person name="Roy A."/>
            <person name="Foley K."/>
            <person name="Naylor J."/>
            <person name="Stange-Thomann N."/>
            <person name="Barrett R."/>
            <person name="Gnerre S."/>
            <person name="Kamal M."/>
            <person name="Kamvysselis M."/>
            <person name="Mauceli E.W."/>
            <person name="Bielke C."/>
            <person name="Rudd S."/>
            <person name="Frishman D."/>
            <person name="Krystofova S."/>
            <person name="Rasmussen C."/>
            <person name="Metzenberg R.L."/>
            <person name="Perkins D.D."/>
            <person name="Kroken S."/>
            <person name="Cogoni C."/>
            <person name="Macino G."/>
            <person name="Catcheside D.E.A."/>
            <person name="Li W."/>
            <person name="Pratt R.J."/>
            <person name="Osmani S.A."/>
            <person name="DeSouza C.P.C."/>
            <person name="Glass N.L."/>
            <person name="Orbach M.J."/>
            <person name="Berglund J.A."/>
            <person name="Voelker R."/>
            <person name="Yarden O."/>
            <person name="Plamann M."/>
            <person name="Seiler S."/>
            <person name="Dunlap J.C."/>
            <person name="Radford A."/>
            <person name="Aramayo R."/>
            <person name="Natvig D.O."/>
            <person name="Alex L.A."/>
            <person name="Mannhaupt G."/>
            <person name="Ebbole D.J."/>
            <person name="Freitag M."/>
            <person name="Paulsen I."/>
            <person name="Sachs M.S."/>
            <person name="Lander E.S."/>
            <person name="Nusbaum C."/>
            <person name="Birren B.W."/>
        </authorList>
    </citation>
    <scope>NUCLEOTIDE SEQUENCE [LARGE SCALE GENOMIC DNA]</scope>
    <source>
        <strain>ATCC 24698 / 74-OR23-1A / CBS 708.71 / DSM 1257 / FGSC 987</strain>
    </source>
</reference>
<reference key="2">
    <citation type="journal article" date="2009" name="Curr. Genet.">
        <title>A novel polyketide biosynthesis gene cluster is involved in fruiting body morphogenesis in the filamentous fungi Sordaria macrospora and Neurospora crassa.</title>
        <authorList>
            <person name="Nowrousian M."/>
        </authorList>
    </citation>
    <scope>FUNCTION</scope>
    <scope>INDUCTION</scope>
</reference>
<reference key="3">
    <citation type="journal article" date="2017" name="Environ. Microbiol.">
        <title>Production of a fungal furocoumarin by a polyketide synthase gene cluster confers the chemo-resistance of Neurospora crassa to the predation by fungivorous arthropods.</title>
        <authorList>
            <person name="Zhao Y."/>
            <person name="Ding J."/>
            <person name="Yuan W."/>
            <person name="Huang J."/>
            <person name="Huang W."/>
            <person name="Wang Y."/>
            <person name="Zheng W."/>
        </authorList>
    </citation>
    <scope>FUNCTION</scope>
    <scope>INDUCTION</scope>
</reference>
<reference key="4">
    <citation type="journal article" date="2019" name="J. Nat. Prod.">
        <title>Genome mining reveals Neurospora crassa can produce the salicylaldehyde sordarial.</title>
        <authorList>
            <person name="Zhao Z."/>
            <person name="Ying Y."/>
            <person name="Hung Y.S."/>
            <person name="Tang Y."/>
        </authorList>
    </citation>
    <scope>FUNCTION</scope>
    <scope>PATHWAY</scope>
</reference>